<keyword id="KW-0963">Cytoplasm</keyword>
<keyword id="KW-0342">GTP-binding</keyword>
<keyword id="KW-0436">Ligase</keyword>
<keyword id="KW-0460">Magnesium</keyword>
<keyword id="KW-0479">Metal-binding</keyword>
<keyword id="KW-0547">Nucleotide-binding</keyword>
<keyword id="KW-0658">Purine biosynthesis</keyword>
<comment type="function">
    <text evidence="1">Plays an important role in the de novo pathway of purine nucleotide biosynthesis. Catalyzes the first committed step in the biosynthesis of AMP from IMP.</text>
</comment>
<comment type="catalytic activity">
    <reaction evidence="1">
        <text>IMP + L-aspartate + GTP = N(6)-(1,2-dicarboxyethyl)-AMP + GDP + phosphate + 2 H(+)</text>
        <dbReference type="Rhea" id="RHEA:15753"/>
        <dbReference type="ChEBI" id="CHEBI:15378"/>
        <dbReference type="ChEBI" id="CHEBI:29991"/>
        <dbReference type="ChEBI" id="CHEBI:37565"/>
        <dbReference type="ChEBI" id="CHEBI:43474"/>
        <dbReference type="ChEBI" id="CHEBI:57567"/>
        <dbReference type="ChEBI" id="CHEBI:58053"/>
        <dbReference type="ChEBI" id="CHEBI:58189"/>
        <dbReference type="EC" id="6.3.4.4"/>
    </reaction>
</comment>
<comment type="cofactor">
    <cofactor evidence="1">
        <name>Mg(2+)</name>
        <dbReference type="ChEBI" id="CHEBI:18420"/>
    </cofactor>
    <text evidence="1">Binds 1 Mg(2+) ion per subunit.</text>
</comment>
<comment type="pathway">
    <text evidence="1">Purine metabolism; AMP biosynthesis via de novo pathway; AMP from IMP: step 1/2.</text>
</comment>
<comment type="subunit">
    <text evidence="1">Homodimer.</text>
</comment>
<comment type="subcellular location">
    <subcellularLocation>
        <location evidence="1">Cytoplasm</location>
    </subcellularLocation>
</comment>
<comment type="similarity">
    <text evidence="1">Belongs to the adenylosuccinate synthetase family.</text>
</comment>
<reference key="1">
    <citation type="journal article" date="2010" name="Genome Biol. Evol.">
        <title>Continuing evolution of Burkholderia mallei through genome reduction and large-scale rearrangements.</title>
        <authorList>
            <person name="Losada L."/>
            <person name="Ronning C.M."/>
            <person name="DeShazer D."/>
            <person name="Woods D."/>
            <person name="Fedorova N."/>
            <person name="Kim H.S."/>
            <person name="Shabalina S.A."/>
            <person name="Pearson T.R."/>
            <person name="Brinkac L."/>
            <person name="Tan P."/>
            <person name="Nandi T."/>
            <person name="Crabtree J."/>
            <person name="Badger J."/>
            <person name="Beckstrom-Sternberg S."/>
            <person name="Saqib M."/>
            <person name="Schutzer S.E."/>
            <person name="Keim P."/>
            <person name="Nierman W.C."/>
        </authorList>
    </citation>
    <scope>NUCLEOTIDE SEQUENCE [LARGE SCALE GENOMIC DNA]</scope>
    <source>
        <strain>668</strain>
    </source>
</reference>
<organism>
    <name type="scientific">Burkholderia pseudomallei (strain 668)</name>
    <dbReference type="NCBI Taxonomy" id="320373"/>
    <lineage>
        <taxon>Bacteria</taxon>
        <taxon>Pseudomonadati</taxon>
        <taxon>Pseudomonadota</taxon>
        <taxon>Betaproteobacteria</taxon>
        <taxon>Burkholderiales</taxon>
        <taxon>Burkholderiaceae</taxon>
        <taxon>Burkholderia</taxon>
        <taxon>pseudomallei group</taxon>
    </lineage>
</organism>
<feature type="chain" id="PRO_1000000790" description="Adenylosuccinate synthetase">
    <location>
        <begin position="1"/>
        <end position="448"/>
    </location>
</feature>
<feature type="active site" description="Proton acceptor" evidence="1">
    <location>
        <position position="23"/>
    </location>
</feature>
<feature type="active site" description="Proton donor" evidence="1">
    <location>
        <position position="51"/>
    </location>
</feature>
<feature type="binding site" evidence="1">
    <location>
        <begin position="22"/>
        <end position="28"/>
    </location>
    <ligand>
        <name>GTP</name>
        <dbReference type="ChEBI" id="CHEBI:37565"/>
    </ligand>
</feature>
<feature type="binding site" description="in other chain" evidence="1">
    <location>
        <begin position="23"/>
        <end position="26"/>
    </location>
    <ligand>
        <name>IMP</name>
        <dbReference type="ChEBI" id="CHEBI:58053"/>
        <note>ligand shared between dimeric partners</note>
    </ligand>
</feature>
<feature type="binding site" evidence="1">
    <location>
        <position position="23"/>
    </location>
    <ligand>
        <name>Mg(2+)</name>
        <dbReference type="ChEBI" id="CHEBI:18420"/>
    </ligand>
</feature>
<feature type="binding site" description="in other chain" evidence="1">
    <location>
        <begin position="48"/>
        <end position="51"/>
    </location>
    <ligand>
        <name>IMP</name>
        <dbReference type="ChEBI" id="CHEBI:58053"/>
        <note>ligand shared between dimeric partners</note>
    </ligand>
</feature>
<feature type="binding site" evidence="1">
    <location>
        <begin position="50"/>
        <end position="52"/>
    </location>
    <ligand>
        <name>GTP</name>
        <dbReference type="ChEBI" id="CHEBI:37565"/>
    </ligand>
</feature>
<feature type="binding site" evidence="1">
    <location>
        <position position="50"/>
    </location>
    <ligand>
        <name>Mg(2+)</name>
        <dbReference type="ChEBI" id="CHEBI:18420"/>
    </ligand>
</feature>
<feature type="binding site" description="in other chain" evidence="1">
    <location>
        <position position="139"/>
    </location>
    <ligand>
        <name>IMP</name>
        <dbReference type="ChEBI" id="CHEBI:58053"/>
        <note>ligand shared between dimeric partners</note>
    </ligand>
</feature>
<feature type="binding site" evidence="1">
    <location>
        <position position="153"/>
    </location>
    <ligand>
        <name>IMP</name>
        <dbReference type="ChEBI" id="CHEBI:58053"/>
        <note>ligand shared between dimeric partners</note>
    </ligand>
</feature>
<feature type="binding site" description="in other chain" evidence="1">
    <location>
        <position position="234"/>
    </location>
    <ligand>
        <name>IMP</name>
        <dbReference type="ChEBI" id="CHEBI:58053"/>
        <note>ligand shared between dimeric partners</note>
    </ligand>
</feature>
<feature type="binding site" description="in other chain" evidence="1">
    <location>
        <position position="249"/>
    </location>
    <ligand>
        <name>IMP</name>
        <dbReference type="ChEBI" id="CHEBI:58053"/>
        <note>ligand shared between dimeric partners</note>
    </ligand>
</feature>
<feature type="binding site" evidence="1">
    <location>
        <begin position="317"/>
        <end position="323"/>
    </location>
    <ligand>
        <name>substrate</name>
    </ligand>
</feature>
<feature type="binding site" description="in other chain" evidence="1">
    <location>
        <position position="321"/>
    </location>
    <ligand>
        <name>IMP</name>
        <dbReference type="ChEBI" id="CHEBI:58053"/>
        <note>ligand shared between dimeric partners</note>
    </ligand>
</feature>
<feature type="binding site" evidence="1">
    <location>
        <position position="323"/>
    </location>
    <ligand>
        <name>GTP</name>
        <dbReference type="ChEBI" id="CHEBI:37565"/>
    </ligand>
</feature>
<feature type="binding site" evidence="1">
    <location>
        <begin position="349"/>
        <end position="351"/>
    </location>
    <ligand>
        <name>GTP</name>
        <dbReference type="ChEBI" id="CHEBI:37565"/>
    </ligand>
</feature>
<feature type="binding site" evidence="1">
    <location>
        <begin position="431"/>
        <end position="433"/>
    </location>
    <ligand>
        <name>GTP</name>
        <dbReference type="ChEBI" id="CHEBI:37565"/>
    </ligand>
</feature>
<proteinExistence type="inferred from homology"/>
<protein>
    <recommendedName>
        <fullName evidence="1">Adenylosuccinate synthetase</fullName>
        <shortName evidence="1">AMPSase</shortName>
        <shortName evidence="1">AdSS</shortName>
        <ecNumber evidence="1">6.3.4.4</ecNumber>
    </recommendedName>
    <alternativeName>
        <fullName evidence="1">IMP--aspartate ligase</fullName>
    </alternativeName>
</protein>
<sequence>MSASAVNVTPGRNVVVVGTQWGDEGKGKIVDWLTDHAQGVVRFQGGHNAGHTLIIGGKKTILRLIPSGIMREGVACYIGNGVVLSPEALFKEIGELEEAGLSVRERLFISEATTLILPYHVAIDQAREARRGAGKIGTTGRGIGPAYEDKVGRRALRVQDLFDARTFADRLRENLDFHNFVLTQYLGGAAVDFQATLDTMLGYADRLKPMVTDVSRRLYEENHAGRNLLFEGAQGTLLDIDHGTYPFVTSSNCVAGAAAAGAGVGPQKLDYILGITKAYCTRVGSGPFPSELYDADNPSRQDQIGITLANVGKEFGSVTGRPRRTGWLDAAALRRSIQINGVSGLCMTKLDVLDGLDEVKLCVGYKIDGEDVDLLPRGAAEVARCEPVYETFGGWKESTVGIDSWDALPANARAYLTRVQEVAGVPIDMVSTGPDRDETILLRHPFKV</sequence>
<evidence type="ECO:0000255" key="1">
    <source>
        <dbReference type="HAMAP-Rule" id="MF_00011"/>
    </source>
</evidence>
<name>PURA_BURP6</name>
<accession>A3NA42</accession>
<dbReference type="EC" id="6.3.4.4" evidence="1"/>
<dbReference type="EMBL" id="CP000570">
    <property type="protein sequence ID" value="ABN83468.1"/>
    <property type="molecule type" value="Genomic_DNA"/>
</dbReference>
<dbReference type="RefSeq" id="WP_004534924.1">
    <property type="nucleotide sequence ID" value="NC_009074.1"/>
</dbReference>
<dbReference type="SMR" id="A3NA42"/>
<dbReference type="KEGG" id="bpd:BURPS668_2178"/>
<dbReference type="HOGENOM" id="CLU_029848_0_0_4"/>
<dbReference type="UniPathway" id="UPA00075">
    <property type="reaction ID" value="UER00335"/>
</dbReference>
<dbReference type="GO" id="GO:0005737">
    <property type="term" value="C:cytoplasm"/>
    <property type="evidence" value="ECO:0007669"/>
    <property type="project" value="UniProtKB-SubCell"/>
</dbReference>
<dbReference type="GO" id="GO:0004019">
    <property type="term" value="F:adenylosuccinate synthase activity"/>
    <property type="evidence" value="ECO:0007669"/>
    <property type="project" value="UniProtKB-UniRule"/>
</dbReference>
<dbReference type="GO" id="GO:0005525">
    <property type="term" value="F:GTP binding"/>
    <property type="evidence" value="ECO:0007669"/>
    <property type="project" value="UniProtKB-UniRule"/>
</dbReference>
<dbReference type="GO" id="GO:0000287">
    <property type="term" value="F:magnesium ion binding"/>
    <property type="evidence" value="ECO:0007669"/>
    <property type="project" value="UniProtKB-UniRule"/>
</dbReference>
<dbReference type="GO" id="GO:0044208">
    <property type="term" value="P:'de novo' AMP biosynthetic process"/>
    <property type="evidence" value="ECO:0007669"/>
    <property type="project" value="UniProtKB-UniRule"/>
</dbReference>
<dbReference type="GO" id="GO:0046040">
    <property type="term" value="P:IMP metabolic process"/>
    <property type="evidence" value="ECO:0007669"/>
    <property type="project" value="TreeGrafter"/>
</dbReference>
<dbReference type="CDD" id="cd03108">
    <property type="entry name" value="AdSS"/>
    <property type="match status" value="1"/>
</dbReference>
<dbReference type="FunFam" id="1.10.300.10:FF:000001">
    <property type="entry name" value="Adenylosuccinate synthetase"/>
    <property type="match status" value="1"/>
</dbReference>
<dbReference type="FunFam" id="3.90.170.10:FF:000001">
    <property type="entry name" value="Adenylosuccinate synthetase"/>
    <property type="match status" value="1"/>
</dbReference>
<dbReference type="Gene3D" id="3.40.440.10">
    <property type="entry name" value="Adenylosuccinate Synthetase, subunit A, domain 1"/>
    <property type="match status" value="1"/>
</dbReference>
<dbReference type="Gene3D" id="1.10.300.10">
    <property type="entry name" value="Adenylosuccinate Synthetase, subunit A, domain 2"/>
    <property type="match status" value="1"/>
</dbReference>
<dbReference type="Gene3D" id="3.90.170.10">
    <property type="entry name" value="Adenylosuccinate Synthetase, subunit A, domain 3"/>
    <property type="match status" value="1"/>
</dbReference>
<dbReference type="HAMAP" id="MF_00011">
    <property type="entry name" value="Adenylosucc_synth"/>
    <property type="match status" value="1"/>
</dbReference>
<dbReference type="InterPro" id="IPR018220">
    <property type="entry name" value="Adenylosuccin_syn_GTP-bd"/>
</dbReference>
<dbReference type="InterPro" id="IPR033128">
    <property type="entry name" value="Adenylosuccin_syn_Lys_AS"/>
</dbReference>
<dbReference type="InterPro" id="IPR042109">
    <property type="entry name" value="Adenylosuccinate_synth_dom1"/>
</dbReference>
<dbReference type="InterPro" id="IPR042110">
    <property type="entry name" value="Adenylosuccinate_synth_dom2"/>
</dbReference>
<dbReference type="InterPro" id="IPR042111">
    <property type="entry name" value="Adenylosuccinate_synth_dom3"/>
</dbReference>
<dbReference type="InterPro" id="IPR001114">
    <property type="entry name" value="Adenylosuccinate_synthetase"/>
</dbReference>
<dbReference type="InterPro" id="IPR027417">
    <property type="entry name" value="P-loop_NTPase"/>
</dbReference>
<dbReference type="NCBIfam" id="NF002223">
    <property type="entry name" value="PRK01117.1"/>
    <property type="match status" value="1"/>
</dbReference>
<dbReference type="NCBIfam" id="TIGR00184">
    <property type="entry name" value="purA"/>
    <property type="match status" value="1"/>
</dbReference>
<dbReference type="PANTHER" id="PTHR11846">
    <property type="entry name" value="ADENYLOSUCCINATE SYNTHETASE"/>
    <property type="match status" value="1"/>
</dbReference>
<dbReference type="PANTHER" id="PTHR11846:SF0">
    <property type="entry name" value="ADENYLOSUCCINATE SYNTHETASE"/>
    <property type="match status" value="1"/>
</dbReference>
<dbReference type="Pfam" id="PF00709">
    <property type="entry name" value="Adenylsucc_synt"/>
    <property type="match status" value="1"/>
</dbReference>
<dbReference type="SMART" id="SM00788">
    <property type="entry name" value="Adenylsucc_synt"/>
    <property type="match status" value="1"/>
</dbReference>
<dbReference type="SUPFAM" id="SSF52540">
    <property type="entry name" value="P-loop containing nucleoside triphosphate hydrolases"/>
    <property type="match status" value="1"/>
</dbReference>
<dbReference type="PROSITE" id="PS01266">
    <property type="entry name" value="ADENYLOSUCCIN_SYN_1"/>
    <property type="match status" value="1"/>
</dbReference>
<dbReference type="PROSITE" id="PS00513">
    <property type="entry name" value="ADENYLOSUCCIN_SYN_2"/>
    <property type="match status" value="1"/>
</dbReference>
<gene>
    <name evidence="1" type="primary">purA</name>
    <name type="ordered locus">BURPS668_2178</name>
</gene>